<sequence>MLLGKRQRPPINRTTSLSEIKFDLNLPSESEPSNQQKPTVASPYGSNGQAVTAAVDQNRGFLDQRLLSMVTPRGNLRRHSGDFSDAGHFLRSCALCERLLVPGRDIYMYRGDKAFCSSECRQEQMAQDERKEKGKSAAPAKEPAVTAPARAKPGKGRAAAAV</sequence>
<proteinExistence type="evidence at protein level"/>
<name>FLZ6_ARATH</name>
<evidence type="ECO:0000255" key="1">
    <source>
        <dbReference type="PROSITE-ProRule" id="PRU01131"/>
    </source>
</evidence>
<evidence type="ECO:0000256" key="2">
    <source>
        <dbReference type="SAM" id="MobiDB-lite"/>
    </source>
</evidence>
<evidence type="ECO:0000269" key="3">
    <source>
    </source>
</evidence>
<evidence type="ECO:0000269" key="4">
    <source>
    </source>
</evidence>
<evidence type="ECO:0000269" key="5">
    <source>
    </source>
</evidence>
<evidence type="ECO:0000269" key="6">
    <source>
    </source>
</evidence>
<evidence type="ECO:0000303" key="7">
    <source>
    </source>
</evidence>
<evidence type="ECO:0000303" key="8">
    <source>
    </source>
</evidence>
<evidence type="ECO:0000305" key="9"/>
<evidence type="ECO:0000312" key="10">
    <source>
        <dbReference type="Araport" id="AT1G78020"/>
    </source>
</evidence>
<evidence type="ECO:0000312" key="11">
    <source>
        <dbReference type="EMBL" id="AAF17687.1"/>
    </source>
</evidence>
<protein>
    <recommendedName>
        <fullName evidence="8">FCS-Like Zinc finger 6</fullName>
    </recommendedName>
</protein>
<organism>
    <name type="scientific">Arabidopsis thaliana</name>
    <name type="common">Mouse-ear cress</name>
    <dbReference type="NCBI Taxonomy" id="3702"/>
    <lineage>
        <taxon>Eukaryota</taxon>
        <taxon>Viridiplantae</taxon>
        <taxon>Streptophyta</taxon>
        <taxon>Embryophyta</taxon>
        <taxon>Tracheophyta</taxon>
        <taxon>Spermatophyta</taxon>
        <taxon>Magnoliopsida</taxon>
        <taxon>eudicotyledons</taxon>
        <taxon>Gunneridae</taxon>
        <taxon>Pentapetalae</taxon>
        <taxon>rosids</taxon>
        <taxon>malvids</taxon>
        <taxon>Brassicales</taxon>
        <taxon>Brassicaceae</taxon>
        <taxon>Camelineae</taxon>
        <taxon>Arabidopsis</taxon>
    </lineage>
</organism>
<dbReference type="EMBL" id="AC009243">
    <property type="protein sequence ID" value="AAF17687.1"/>
    <property type="molecule type" value="Genomic_DNA"/>
</dbReference>
<dbReference type="EMBL" id="CP002684">
    <property type="protein sequence ID" value="AEE36058.1"/>
    <property type="molecule type" value="Genomic_DNA"/>
</dbReference>
<dbReference type="EMBL" id="AY063882">
    <property type="protein sequence ID" value="AAL36238.1"/>
    <property type="molecule type" value="mRNA"/>
</dbReference>
<dbReference type="EMBL" id="AY117331">
    <property type="protein sequence ID" value="AAM51406.1"/>
    <property type="molecule type" value="mRNA"/>
</dbReference>
<dbReference type="EMBL" id="AY088355">
    <property type="protein sequence ID" value="AAM65894.1"/>
    <property type="molecule type" value="mRNA"/>
</dbReference>
<dbReference type="PIR" id="E96809">
    <property type="entry name" value="E96809"/>
</dbReference>
<dbReference type="RefSeq" id="NP_565167.1">
    <property type="nucleotide sequence ID" value="NM_106451.3"/>
</dbReference>
<dbReference type="FunCoup" id="Q9SGZ8">
    <property type="interactions" value="269"/>
</dbReference>
<dbReference type="IntAct" id="Q9SGZ8">
    <property type="interactions" value="2"/>
</dbReference>
<dbReference type="STRING" id="3702.Q9SGZ8"/>
<dbReference type="GlyGen" id="Q9SGZ8">
    <property type="glycosylation" value="1 site"/>
</dbReference>
<dbReference type="iPTMnet" id="Q9SGZ8"/>
<dbReference type="PaxDb" id="3702-AT1G78020.1"/>
<dbReference type="ProteomicsDB" id="230014"/>
<dbReference type="EnsemblPlants" id="AT1G78020.1">
    <property type="protein sequence ID" value="AT1G78020.1"/>
    <property type="gene ID" value="AT1G78020"/>
</dbReference>
<dbReference type="GeneID" id="844137"/>
<dbReference type="Gramene" id="AT1G78020.1">
    <property type="protein sequence ID" value="AT1G78020.1"/>
    <property type="gene ID" value="AT1G78020"/>
</dbReference>
<dbReference type="KEGG" id="ath:AT1G78020"/>
<dbReference type="Araport" id="AT1G78020"/>
<dbReference type="TAIR" id="AT1G78020">
    <property type="gene designation" value="FLZ6"/>
</dbReference>
<dbReference type="eggNOG" id="ENOG502RZVC">
    <property type="taxonomic scope" value="Eukaryota"/>
</dbReference>
<dbReference type="HOGENOM" id="CLU_085535_1_0_1"/>
<dbReference type="InParanoid" id="Q9SGZ8"/>
<dbReference type="OMA" id="EPAHFLH"/>
<dbReference type="OrthoDB" id="1925036at2759"/>
<dbReference type="PhylomeDB" id="Q9SGZ8"/>
<dbReference type="PRO" id="PR:Q9SGZ8"/>
<dbReference type="Proteomes" id="UP000006548">
    <property type="component" value="Chromosome 1"/>
</dbReference>
<dbReference type="ExpressionAtlas" id="Q9SGZ8">
    <property type="expression patterns" value="baseline and differential"/>
</dbReference>
<dbReference type="GO" id="GO:0005737">
    <property type="term" value="C:cytoplasm"/>
    <property type="evidence" value="ECO:0000314"/>
    <property type="project" value="TAIR"/>
</dbReference>
<dbReference type="GO" id="GO:0005829">
    <property type="term" value="C:cytosol"/>
    <property type="evidence" value="ECO:0000314"/>
    <property type="project" value="UniProtKB"/>
</dbReference>
<dbReference type="GO" id="GO:0005783">
    <property type="term" value="C:endoplasmic reticulum"/>
    <property type="evidence" value="ECO:0007669"/>
    <property type="project" value="UniProtKB-SubCell"/>
</dbReference>
<dbReference type="GO" id="GO:0005634">
    <property type="term" value="C:nucleus"/>
    <property type="evidence" value="ECO:0000314"/>
    <property type="project" value="UniProtKB"/>
</dbReference>
<dbReference type="GO" id="GO:0019900">
    <property type="term" value="F:kinase binding"/>
    <property type="evidence" value="ECO:0000353"/>
    <property type="project" value="UniProtKB"/>
</dbReference>
<dbReference type="GO" id="GO:0008270">
    <property type="term" value="F:zinc ion binding"/>
    <property type="evidence" value="ECO:0007669"/>
    <property type="project" value="UniProtKB-KW"/>
</dbReference>
<dbReference type="GO" id="GO:0042594">
    <property type="term" value="P:response to starvation"/>
    <property type="evidence" value="ECO:0000270"/>
    <property type="project" value="UniProtKB"/>
</dbReference>
<dbReference type="GO" id="GO:0090351">
    <property type="term" value="P:seedling development"/>
    <property type="evidence" value="ECO:0000315"/>
    <property type="project" value="TAIR"/>
</dbReference>
<dbReference type="InterPro" id="IPR007650">
    <property type="entry name" value="Zf-FLZ_dom"/>
</dbReference>
<dbReference type="PANTHER" id="PTHR33059">
    <property type="entry name" value="FCS-LIKE ZINC FINGER 5"/>
    <property type="match status" value="1"/>
</dbReference>
<dbReference type="PANTHER" id="PTHR33059:SF90">
    <property type="entry name" value="FCS-LIKE ZINC FINGER 6"/>
    <property type="match status" value="1"/>
</dbReference>
<dbReference type="Pfam" id="PF04570">
    <property type="entry name" value="zf-FLZ"/>
    <property type="match status" value="1"/>
</dbReference>
<dbReference type="PROSITE" id="PS51795">
    <property type="entry name" value="ZF_FLZ"/>
    <property type="match status" value="1"/>
</dbReference>
<accession>Q9SGZ8</accession>
<accession>Q8L9M2</accession>
<gene>
    <name evidence="8" type="primary">FLZ6</name>
    <name evidence="7" type="synonym">DUF581-6</name>
    <name evidence="10" type="ordered locus">At1g78020</name>
    <name evidence="11" type="ORF">F28K19.24</name>
</gene>
<feature type="chain" id="PRO_0000445497" description="FCS-Like Zinc finger 6">
    <location>
        <begin position="1"/>
        <end position="162"/>
    </location>
</feature>
<feature type="zinc finger region" description="FLZ-type" evidence="1">
    <location>
        <begin position="88"/>
        <end position="132"/>
    </location>
</feature>
<feature type="region of interest" description="Disordered" evidence="2">
    <location>
        <begin position="25"/>
        <end position="47"/>
    </location>
</feature>
<feature type="region of interest" description="Disordered" evidence="2">
    <location>
        <begin position="121"/>
        <end position="162"/>
    </location>
</feature>
<feature type="compositionally biased region" description="Polar residues" evidence="2">
    <location>
        <begin position="27"/>
        <end position="47"/>
    </location>
</feature>
<feature type="compositionally biased region" description="Low complexity" evidence="2">
    <location>
        <begin position="147"/>
        <end position="162"/>
    </location>
</feature>
<feature type="sequence conflict" description="In Ref. 4; AAM65894." evidence="9" ref="4">
    <original>G</original>
    <variation>R</variation>
    <location>
        <position position="87"/>
    </location>
</feature>
<reference key="1">
    <citation type="journal article" date="2000" name="Nature">
        <title>Sequence and analysis of chromosome 1 of the plant Arabidopsis thaliana.</title>
        <authorList>
            <person name="Theologis A."/>
            <person name="Ecker J.R."/>
            <person name="Palm C.J."/>
            <person name="Federspiel N.A."/>
            <person name="Kaul S."/>
            <person name="White O."/>
            <person name="Alonso J."/>
            <person name="Altafi H."/>
            <person name="Araujo R."/>
            <person name="Bowman C.L."/>
            <person name="Brooks S.Y."/>
            <person name="Buehler E."/>
            <person name="Chan A."/>
            <person name="Chao Q."/>
            <person name="Chen H."/>
            <person name="Cheuk R.F."/>
            <person name="Chin C.W."/>
            <person name="Chung M.K."/>
            <person name="Conn L."/>
            <person name="Conway A.B."/>
            <person name="Conway A.R."/>
            <person name="Creasy T.H."/>
            <person name="Dewar K."/>
            <person name="Dunn P."/>
            <person name="Etgu P."/>
            <person name="Feldblyum T.V."/>
            <person name="Feng J.-D."/>
            <person name="Fong B."/>
            <person name="Fujii C.Y."/>
            <person name="Gill J.E."/>
            <person name="Goldsmith A.D."/>
            <person name="Haas B."/>
            <person name="Hansen N.F."/>
            <person name="Hughes B."/>
            <person name="Huizar L."/>
            <person name="Hunter J.L."/>
            <person name="Jenkins J."/>
            <person name="Johnson-Hopson C."/>
            <person name="Khan S."/>
            <person name="Khaykin E."/>
            <person name="Kim C.J."/>
            <person name="Koo H.L."/>
            <person name="Kremenetskaia I."/>
            <person name="Kurtz D.B."/>
            <person name="Kwan A."/>
            <person name="Lam B."/>
            <person name="Langin-Hooper S."/>
            <person name="Lee A."/>
            <person name="Lee J.M."/>
            <person name="Lenz C.A."/>
            <person name="Li J.H."/>
            <person name="Li Y.-P."/>
            <person name="Lin X."/>
            <person name="Liu S.X."/>
            <person name="Liu Z.A."/>
            <person name="Luros J.S."/>
            <person name="Maiti R."/>
            <person name="Marziali A."/>
            <person name="Militscher J."/>
            <person name="Miranda M."/>
            <person name="Nguyen M."/>
            <person name="Nierman W.C."/>
            <person name="Osborne B.I."/>
            <person name="Pai G."/>
            <person name="Peterson J."/>
            <person name="Pham P.K."/>
            <person name="Rizzo M."/>
            <person name="Rooney T."/>
            <person name="Rowley D."/>
            <person name="Sakano H."/>
            <person name="Salzberg S.L."/>
            <person name="Schwartz J.R."/>
            <person name="Shinn P."/>
            <person name="Southwick A.M."/>
            <person name="Sun H."/>
            <person name="Tallon L.J."/>
            <person name="Tambunga G."/>
            <person name="Toriumi M.J."/>
            <person name="Town C.D."/>
            <person name="Utterback T."/>
            <person name="Van Aken S."/>
            <person name="Vaysberg M."/>
            <person name="Vysotskaia V.S."/>
            <person name="Walker M."/>
            <person name="Wu D."/>
            <person name="Yu G."/>
            <person name="Fraser C.M."/>
            <person name="Venter J.C."/>
            <person name="Davis R.W."/>
        </authorList>
    </citation>
    <scope>NUCLEOTIDE SEQUENCE [LARGE SCALE GENOMIC DNA]</scope>
    <source>
        <strain>cv. Columbia</strain>
    </source>
</reference>
<reference key="2">
    <citation type="journal article" date="2017" name="Plant J.">
        <title>Araport11: a complete reannotation of the Arabidopsis thaliana reference genome.</title>
        <authorList>
            <person name="Cheng C.Y."/>
            <person name="Krishnakumar V."/>
            <person name="Chan A.P."/>
            <person name="Thibaud-Nissen F."/>
            <person name="Schobel S."/>
            <person name="Town C.D."/>
        </authorList>
    </citation>
    <scope>GENOME REANNOTATION</scope>
    <source>
        <strain>cv. Columbia</strain>
    </source>
</reference>
<reference key="3">
    <citation type="journal article" date="2003" name="Science">
        <title>Empirical analysis of transcriptional activity in the Arabidopsis genome.</title>
        <authorList>
            <person name="Yamada K."/>
            <person name="Lim J."/>
            <person name="Dale J.M."/>
            <person name="Chen H."/>
            <person name="Shinn P."/>
            <person name="Palm C.J."/>
            <person name="Southwick A.M."/>
            <person name="Wu H.C."/>
            <person name="Kim C.J."/>
            <person name="Nguyen M."/>
            <person name="Pham P.K."/>
            <person name="Cheuk R.F."/>
            <person name="Karlin-Newmann G."/>
            <person name="Liu S.X."/>
            <person name="Lam B."/>
            <person name="Sakano H."/>
            <person name="Wu T."/>
            <person name="Yu G."/>
            <person name="Miranda M."/>
            <person name="Quach H.L."/>
            <person name="Tripp M."/>
            <person name="Chang C.H."/>
            <person name="Lee J.M."/>
            <person name="Toriumi M.J."/>
            <person name="Chan M.M."/>
            <person name="Tang C.C."/>
            <person name="Onodera C.S."/>
            <person name="Deng J.M."/>
            <person name="Akiyama K."/>
            <person name="Ansari Y."/>
            <person name="Arakawa T."/>
            <person name="Banh J."/>
            <person name="Banno F."/>
            <person name="Bowser L."/>
            <person name="Brooks S.Y."/>
            <person name="Carninci P."/>
            <person name="Chao Q."/>
            <person name="Choy N."/>
            <person name="Enju A."/>
            <person name="Goldsmith A.D."/>
            <person name="Gurjal M."/>
            <person name="Hansen N.F."/>
            <person name="Hayashizaki Y."/>
            <person name="Johnson-Hopson C."/>
            <person name="Hsuan V.W."/>
            <person name="Iida K."/>
            <person name="Karnes M."/>
            <person name="Khan S."/>
            <person name="Koesema E."/>
            <person name="Ishida J."/>
            <person name="Jiang P.X."/>
            <person name="Jones T."/>
            <person name="Kawai J."/>
            <person name="Kamiya A."/>
            <person name="Meyers C."/>
            <person name="Nakajima M."/>
            <person name="Narusaka M."/>
            <person name="Seki M."/>
            <person name="Sakurai T."/>
            <person name="Satou M."/>
            <person name="Tamse R."/>
            <person name="Vaysberg M."/>
            <person name="Wallender E.K."/>
            <person name="Wong C."/>
            <person name="Yamamura Y."/>
            <person name="Yuan S."/>
            <person name="Shinozaki K."/>
            <person name="Davis R.W."/>
            <person name="Theologis A."/>
            <person name="Ecker J.R."/>
        </authorList>
    </citation>
    <scope>NUCLEOTIDE SEQUENCE [LARGE SCALE MRNA]</scope>
    <source>
        <strain>cv. Columbia</strain>
    </source>
</reference>
<reference key="4">
    <citation type="submission" date="2002-03" db="EMBL/GenBank/DDBJ databases">
        <title>Full-length cDNA from Arabidopsis thaliana.</title>
        <authorList>
            <person name="Brover V.V."/>
            <person name="Troukhan M.E."/>
            <person name="Alexandrov N.A."/>
            <person name="Lu Y.-P."/>
            <person name="Flavell R.B."/>
            <person name="Feldmann K.A."/>
        </authorList>
    </citation>
    <scope>NUCLEOTIDE SEQUENCE [LARGE SCALE MRNA]</scope>
</reference>
<reference key="5">
    <citation type="journal article" date="2009" name="Plant Physiol.">
        <title>Large-scale Arabidopsis phosphoproteome profiling reveals novel chloroplast kinase substrates and phosphorylation networks.</title>
        <authorList>
            <person name="Reiland S."/>
            <person name="Messerli G."/>
            <person name="Baerenfaller K."/>
            <person name="Gerrits B."/>
            <person name="Endler A."/>
            <person name="Grossmann J."/>
            <person name="Gruissem W."/>
            <person name="Baginsky S."/>
        </authorList>
    </citation>
    <scope>IDENTIFICATION BY MASS SPECTROMETRY [LARGE SCALE ANALYSIS]</scope>
    <source>
        <strain>cv. Columbia</strain>
    </source>
</reference>
<reference key="6">
    <citation type="journal article" date="2014" name="Front. Plant Sci.">
        <title>The complex becomes more complex: protein-protein interactions of SnRK1 with DUF581 family proteins provide a framework for cell- and stimulus type-specific SnRK1 signaling in plants.</title>
        <authorList>
            <person name="Nietzsche M."/>
            <person name="Schiessl I."/>
            <person name="Boernke F."/>
        </authorList>
    </citation>
    <scope>GENE FAMILY</scope>
    <scope>INTERACTION WITH KIN10 AND KIN11</scope>
    <scope>SUBCELLULAR LOCATION</scope>
    <scope>FUNCTION</scope>
</reference>
<reference key="7">
    <citation type="journal article" date="2014" name="Front. Plant Sci.">
        <title>Corrigendum: The complex becomes more complex: protein-protein interactions of SnRK1 with DUF581 family proteins provide a framework for cell- and stimulus type-specific SnRK1 signaling in plants.</title>
        <authorList>
            <person name="Boernke F."/>
        </authorList>
    </citation>
    <scope>ERRATUM OF PUBMED:24600465</scope>
</reference>
<reference key="8">
    <citation type="journal article" date="2014" name="PLoS ONE">
        <title>DUF581 is plant specific FCS-like zinc finger involved in protein-protein interaction.</title>
        <authorList>
            <person name="Jamsheer K M."/>
            <person name="Laxmi A."/>
        </authorList>
    </citation>
    <scope>GENE FAMILY</scope>
    <scope>NOMENCLATURE</scope>
</reference>
<reference key="9">
    <citation type="journal article" date="2015" name="Front. Plant Sci.">
        <title>Expression of Arabidopsis FCS-Like Zinc finger genes is differentially regulated by sugars, cellular energy level, and abiotic stress.</title>
        <authorList>
            <person name="Jamsheer K M."/>
            <person name="Laxmi A."/>
        </authorList>
    </citation>
    <scope>INDUCTION</scope>
</reference>
<reference key="10">
    <citation type="journal article" date="2018" name="J. Biol. Chem.">
        <title>The FCS-like zinc finger scaffold of the kinase SnRK1 is formed by the coordinated actions of the FLZ domain and intrinsically disordered regions.</title>
        <authorList>
            <person name="Jamsheer K M."/>
            <person name="Shukla B.N."/>
            <person name="Jindal S."/>
            <person name="Gopan N."/>
            <person name="Mannully C.T."/>
            <person name="Laxmi A."/>
        </authorList>
    </citation>
    <scope>INTERACTION WITH KIN10 AND KIN11</scope>
</reference>
<reference key="11">
    <citation type="journal article" date="2018" name="Plant J.">
        <title>FCS-like zinc finger 6 and 10 repress SnRK1 signalling in Arabidopsis.</title>
        <authorList>
            <person name="Jamsheer K M."/>
            <person name="Sharma M."/>
            <person name="Singh D."/>
            <person name="Mannully C.T."/>
            <person name="Jindal S."/>
            <person name="Shukla B.N."/>
            <person name="Laxmi A."/>
        </authorList>
    </citation>
    <scope>TISSUE SPECIFICITY</scope>
    <scope>INTERACTION WITH KIN10 AND KIN11</scope>
    <scope>SUBCELLULAR LOCATION</scope>
    <scope>INDUCTION</scope>
    <scope>DISRUPTION PHENOTYPE</scope>
    <scope>FUNCTION</scope>
</reference>
<keyword id="KW-0963">Cytoplasm</keyword>
<keyword id="KW-0256">Endoplasmic reticulum</keyword>
<keyword id="KW-0479">Metal-binding</keyword>
<keyword id="KW-0539">Nucleus</keyword>
<keyword id="KW-1185">Reference proteome</keyword>
<keyword id="KW-0862">Zinc</keyword>
<keyword id="KW-0863">Zinc-finger</keyword>
<comment type="function">
    <text evidence="3 5">May act as an adapter to facilitate the interaction of SnRK1 complex with effector proteins, conferring tissue- and stimulus-type specific differences in the SnRK1 regulation pathway (PubMed:24600465). Negatively regulates KIN10 leading to a repression of the SnRK1 signaling pathway (PubMed:29406622).</text>
</comment>
<comment type="subunit">
    <text evidence="3 5 6">Interacts with KIN10 and KIN11 via its FLZ-type zinc finger domain.</text>
</comment>
<comment type="subcellular location">
    <subcellularLocation>
        <location evidence="3 5">Nucleus</location>
    </subcellularLocation>
    <subcellularLocation>
        <location evidence="3 5">Cytoplasm</location>
    </subcellularLocation>
    <subcellularLocation>
        <location evidence="5">Endoplasmic reticulum</location>
    </subcellularLocation>
    <text evidence="3 5">Shuttles from the cytoplasm to the nucleus when associated with KIN10 (PubMed:24600465). Co-localized with ER marker when associated with KIN11 (PubMed:29406622).</text>
</comment>
<comment type="tissue specificity">
    <text evidence="5">Early expressed in hypocotyl and cotyledon. Later expressed in old or senescing leaves and in pistil, pollen and filament of open flowers.</text>
</comment>
<comment type="induction">
    <text evidence="4 5">Up-regulated in response to prolonged energy depletion (PubMed:26442059, PubMed:29406622). Up-regulated by the glycolysis inhibitor 2DG (PubMed:26442059). Induced by abscissic acid (ABA) (PubMed:29406622).</text>
</comment>
<comment type="disruption phenotype">
    <text evidence="5">Reduced biomass and lateral roots and shorter primary roots.</text>
</comment>
<comment type="similarity">
    <text evidence="9">Belongs to the FLZ family.</text>
</comment>